<organism>
    <name type="scientific">Saccharomyces cerevisiae (strain ATCC 204508 / S288c)</name>
    <name type="common">Baker's yeast</name>
    <dbReference type="NCBI Taxonomy" id="559292"/>
    <lineage>
        <taxon>Eukaryota</taxon>
        <taxon>Fungi</taxon>
        <taxon>Dikarya</taxon>
        <taxon>Ascomycota</taxon>
        <taxon>Saccharomycotina</taxon>
        <taxon>Saccharomycetes</taxon>
        <taxon>Saccharomycetales</taxon>
        <taxon>Saccharomycetaceae</taxon>
        <taxon>Saccharomyces</taxon>
    </lineage>
</organism>
<dbReference type="EMBL" id="U62805">
    <property type="protein sequence ID" value="AAB40629.1"/>
    <property type="status" value="ALT_FRAME"/>
    <property type="molecule type" value="Genomic_DNA"/>
</dbReference>
<dbReference type="EMBL" id="U33050">
    <property type="protein sequence ID" value="AAB64899.1"/>
    <property type="molecule type" value="Genomic_DNA"/>
</dbReference>
<dbReference type="EMBL" id="BK006938">
    <property type="protein sequence ID" value="DAA12294.1"/>
    <property type="molecule type" value="Genomic_DNA"/>
</dbReference>
<dbReference type="PIR" id="S69628">
    <property type="entry name" value="S69628"/>
</dbReference>
<dbReference type="RefSeq" id="NP_010748.3">
    <property type="nucleotide sequence ID" value="NM_001180768.3"/>
</dbReference>
<dbReference type="PDB" id="5OQJ">
    <property type="method" value="EM"/>
    <property type="resolution" value="4.70 A"/>
    <property type="chains" value="3=1-321"/>
</dbReference>
<dbReference type="PDB" id="5OQM">
    <property type="method" value="EM"/>
    <property type="resolution" value="5.80 A"/>
    <property type="chains" value="3=1-321"/>
</dbReference>
<dbReference type="PDB" id="6GYM">
    <property type="method" value="EM"/>
    <property type="resolution" value="6.70 A"/>
    <property type="chains" value="3=1-321"/>
</dbReference>
<dbReference type="PDB" id="6XI8">
    <property type="method" value="EM"/>
    <property type="resolution" value="3.64 A"/>
    <property type="chains" value="C=259-321"/>
</dbReference>
<dbReference type="PDB" id="7KUE">
    <property type="method" value="EM"/>
    <property type="resolution" value="3.50 A"/>
    <property type="chains" value="C=1-321"/>
</dbReference>
<dbReference type="PDB" id="7ML0">
    <property type="method" value="EM"/>
    <property type="resolution" value="3.00 A"/>
    <property type="chains" value="3=1-321"/>
</dbReference>
<dbReference type="PDB" id="7ML1">
    <property type="method" value="EM"/>
    <property type="resolution" value="4.00 A"/>
    <property type="chains" value="3=1-321"/>
</dbReference>
<dbReference type="PDB" id="7ML2">
    <property type="method" value="EM"/>
    <property type="resolution" value="3.40 A"/>
    <property type="chains" value="3=1-321"/>
</dbReference>
<dbReference type="PDB" id="7ML3">
    <property type="method" value="EM"/>
    <property type="resolution" value="7.60 A"/>
    <property type="chains" value="3=1-321"/>
</dbReference>
<dbReference type="PDB" id="7ML4">
    <property type="method" value="EM"/>
    <property type="resolution" value="3.10 A"/>
    <property type="chains" value="3=1-321"/>
</dbReference>
<dbReference type="PDB" id="7O4I">
    <property type="method" value="EM"/>
    <property type="resolution" value="3.20 A"/>
    <property type="chains" value="3=1-321"/>
</dbReference>
<dbReference type="PDB" id="7O4J">
    <property type="method" value="EM"/>
    <property type="resolution" value="2.90 A"/>
    <property type="chains" value="3=1-321"/>
</dbReference>
<dbReference type="PDB" id="7O4K">
    <property type="method" value="EM"/>
    <property type="resolution" value="3.60 A"/>
    <property type="chains" value="3=1-321"/>
</dbReference>
<dbReference type="PDB" id="7O4L">
    <property type="method" value="EM"/>
    <property type="resolution" value="3.40 A"/>
    <property type="chains" value="3=1-321"/>
</dbReference>
<dbReference type="PDB" id="7O72">
    <property type="method" value="EM"/>
    <property type="resolution" value="3.40 A"/>
    <property type="chains" value="3=1-321"/>
</dbReference>
<dbReference type="PDB" id="7O73">
    <property type="method" value="EM"/>
    <property type="resolution" value="3.40 A"/>
    <property type="chains" value="3=1-321"/>
</dbReference>
<dbReference type="PDB" id="7O75">
    <property type="method" value="EM"/>
    <property type="resolution" value="3.20 A"/>
    <property type="chains" value="3=1-321"/>
</dbReference>
<dbReference type="PDB" id="7ZS9">
    <property type="method" value="EM"/>
    <property type="resolution" value="3.10 A"/>
    <property type="chains" value="3=1-321"/>
</dbReference>
<dbReference type="PDB" id="7ZSA">
    <property type="method" value="EM"/>
    <property type="resolution" value="4.00 A"/>
    <property type="chains" value="3=1-321"/>
</dbReference>
<dbReference type="PDB" id="7ZSB">
    <property type="method" value="EM"/>
    <property type="resolution" value="6.60 A"/>
    <property type="chains" value="3=1-321"/>
</dbReference>
<dbReference type="PDB" id="8CEN">
    <property type="method" value="EM"/>
    <property type="resolution" value="3.00 A"/>
    <property type="chains" value="3=1-321"/>
</dbReference>
<dbReference type="PDB" id="8CEO">
    <property type="method" value="EM"/>
    <property type="resolution" value="3.60 A"/>
    <property type="chains" value="3=1-321"/>
</dbReference>
<dbReference type="PDBsum" id="5OQJ"/>
<dbReference type="PDBsum" id="5OQM"/>
<dbReference type="PDBsum" id="6GYM"/>
<dbReference type="PDBsum" id="6XI8"/>
<dbReference type="PDBsum" id="7KUE"/>
<dbReference type="PDBsum" id="7ML0"/>
<dbReference type="PDBsum" id="7ML1"/>
<dbReference type="PDBsum" id="7ML2"/>
<dbReference type="PDBsum" id="7ML3"/>
<dbReference type="PDBsum" id="7ML4"/>
<dbReference type="PDBsum" id="7O4I"/>
<dbReference type="PDBsum" id="7O4J"/>
<dbReference type="PDBsum" id="7O4K"/>
<dbReference type="PDBsum" id="7O4L"/>
<dbReference type="PDBsum" id="7O72"/>
<dbReference type="PDBsum" id="7O73"/>
<dbReference type="PDBsum" id="7O75"/>
<dbReference type="PDBsum" id="7ZS9"/>
<dbReference type="PDBsum" id="7ZSA"/>
<dbReference type="PDBsum" id="7ZSB"/>
<dbReference type="PDBsum" id="8CEN"/>
<dbReference type="PDBsum" id="8CEO"/>
<dbReference type="EMDB" id="EMD-0092"/>
<dbReference type="EMDB" id="EMD-12719"/>
<dbReference type="EMDB" id="EMD-12720"/>
<dbReference type="EMDB" id="EMD-12721"/>
<dbReference type="EMDB" id="EMD-12722"/>
<dbReference type="EMDB" id="EMD-12743"/>
<dbReference type="EMDB" id="EMD-12744"/>
<dbReference type="EMDB" id="EMD-12745"/>
<dbReference type="EMDB" id="EMD-14927"/>
<dbReference type="EMDB" id="EMD-14928"/>
<dbReference type="EMDB" id="EMD-14929"/>
<dbReference type="EMDB" id="EMD-22191"/>
<dbReference type="EMDB" id="EMD-23036"/>
<dbReference type="EMDB" id="EMD-3846"/>
<dbReference type="EMDB" id="EMD-3850"/>
<dbReference type="SMR" id="Q03290"/>
<dbReference type="BioGRID" id="32514">
    <property type="interactions" value="45"/>
</dbReference>
<dbReference type="ComplexPortal" id="CPX-1659">
    <property type="entry name" value="General transcription factor TFIIH complex"/>
</dbReference>
<dbReference type="ComplexPortal" id="CPX-1660">
    <property type="entry name" value="General transcription factor complex TFIIK"/>
</dbReference>
<dbReference type="DIP" id="DIP-2398N"/>
<dbReference type="FunCoup" id="Q03290">
    <property type="interactions" value="636"/>
</dbReference>
<dbReference type="IntAct" id="Q03290">
    <property type="interactions" value="24"/>
</dbReference>
<dbReference type="MINT" id="Q03290"/>
<dbReference type="STRING" id="4932.YDR460W"/>
<dbReference type="iPTMnet" id="Q03290"/>
<dbReference type="PaxDb" id="4932-YDR460W"/>
<dbReference type="PeptideAtlas" id="Q03290"/>
<dbReference type="EnsemblFungi" id="YDR460W_mRNA">
    <property type="protein sequence ID" value="YDR460W"/>
    <property type="gene ID" value="YDR460W"/>
</dbReference>
<dbReference type="GeneID" id="852071"/>
<dbReference type="KEGG" id="sce:YDR460W"/>
<dbReference type="AGR" id="SGD:S000002868"/>
<dbReference type="SGD" id="S000002868">
    <property type="gene designation" value="TFB3"/>
</dbReference>
<dbReference type="VEuPathDB" id="FungiDB:YDR460W"/>
<dbReference type="eggNOG" id="KOG3800">
    <property type="taxonomic scope" value="Eukaryota"/>
</dbReference>
<dbReference type="GeneTree" id="ENSGT00390000002319"/>
<dbReference type="HOGENOM" id="CLU_048466_1_1_1"/>
<dbReference type="InParanoid" id="Q03290"/>
<dbReference type="OMA" id="PNKRDYY"/>
<dbReference type="OrthoDB" id="5963at2759"/>
<dbReference type="BioCyc" id="YEAST:G3O-29988-MONOMER"/>
<dbReference type="Reactome" id="R-SCE-113418">
    <property type="pathway name" value="Formation of the Early Elongation Complex"/>
</dbReference>
<dbReference type="Reactome" id="R-SCE-674695">
    <property type="pathway name" value="RNA Polymerase II Pre-transcription Events"/>
</dbReference>
<dbReference type="Reactome" id="R-SCE-6781823">
    <property type="pathway name" value="Formation of TC-NER Pre-Incision Complex"/>
</dbReference>
<dbReference type="Reactome" id="R-SCE-6782135">
    <property type="pathway name" value="Dual incision in TC-NER"/>
</dbReference>
<dbReference type="Reactome" id="R-SCE-6782210">
    <property type="pathway name" value="Gap-filling DNA repair synthesis and ligation in TC-NER"/>
</dbReference>
<dbReference type="Reactome" id="R-SCE-6796648">
    <property type="pathway name" value="TP53 Regulates Transcription of DNA Repair Genes"/>
</dbReference>
<dbReference type="Reactome" id="R-SCE-72086">
    <property type="pathway name" value="mRNA Capping"/>
</dbReference>
<dbReference type="Reactome" id="R-SCE-73772">
    <property type="pathway name" value="RNA Polymerase I Promoter Escape"/>
</dbReference>
<dbReference type="Reactome" id="R-SCE-73776">
    <property type="pathway name" value="RNA Polymerase II Promoter Escape"/>
</dbReference>
<dbReference type="Reactome" id="R-SCE-73779">
    <property type="pathway name" value="RNA Polymerase II Transcription Pre-Initiation And Promoter Opening"/>
</dbReference>
<dbReference type="Reactome" id="R-SCE-75953">
    <property type="pathway name" value="RNA Polymerase II Transcription Initiation"/>
</dbReference>
<dbReference type="Reactome" id="R-SCE-76042">
    <property type="pathway name" value="RNA Polymerase II Transcription Initiation And Promoter Clearance"/>
</dbReference>
<dbReference type="Reactome" id="R-SCE-77075">
    <property type="pathway name" value="RNA Pol II CTD phosphorylation and interaction with CE"/>
</dbReference>
<dbReference type="BioGRID-ORCS" id="852071">
    <property type="hits" value="0 hits in 10 CRISPR screens"/>
</dbReference>
<dbReference type="PRO" id="PR:Q03290"/>
<dbReference type="Proteomes" id="UP000002311">
    <property type="component" value="Chromosome IV"/>
</dbReference>
<dbReference type="RNAct" id="Q03290">
    <property type="molecule type" value="protein"/>
</dbReference>
<dbReference type="GO" id="GO:0005675">
    <property type="term" value="C:transcription factor TFIIH holo complex"/>
    <property type="evidence" value="ECO:0000314"/>
    <property type="project" value="SGD"/>
</dbReference>
<dbReference type="GO" id="GO:0070985">
    <property type="term" value="C:transcription factor TFIIK complex"/>
    <property type="evidence" value="ECO:0000314"/>
    <property type="project" value="ComplexPortal"/>
</dbReference>
<dbReference type="GO" id="GO:0061575">
    <property type="term" value="F:cyclin-dependent protein serine/threonine kinase activator activity"/>
    <property type="evidence" value="ECO:0007669"/>
    <property type="project" value="InterPro"/>
</dbReference>
<dbReference type="GO" id="GO:0008270">
    <property type="term" value="F:zinc ion binding"/>
    <property type="evidence" value="ECO:0007669"/>
    <property type="project" value="UniProtKB-KW"/>
</dbReference>
<dbReference type="GO" id="GO:0006281">
    <property type="term" value="P:DNA repair"/>
    <property type="evidence" value="ECO:0000318"/>
    <property type="project" value="GO_Central"/>
</dbReference>
<dbReference type="GO" id="GO:0006289">
    <property type="term" value="P:nucleotide-excision repair"/>
    <property type="evidence" value="ECO:0000314"/>
    <property type="project" value="ComplexPortal"/>
</dbReference>
<dbReference type="GO" id="GO:0006357">
    <property type="term" value="P:regulation of transcription by RNA polymerase II"/>
    <property type="evidence" value="ECO:0000318"/>
    <property type="project" value="GO_Central"/>
</dbReference>
<dbReference type="GO" id="GO:0006366">
    <property type="term" value="P:transcription by RNA polymerase II"/>
    <property type="evidence" value="ECO:0000314"/>
    <property type="project" value="SGD"/>
</dbReference>
<dbReference type="GO" id="GO:0006367">
    <property type="term" value="P:transcription initiation at RNA polymerase II promoter"/>
    <property type="evidence" value="ECO:0000314"/>
    <property type="project" value="ComplexPortal"/>
</dbReference>
<dbReference type="CDD" id="cd16573">
    <property type="entry name" value="RING-HC_TFB3-like"/>
    <property type="match status" value="1"/>
</dbReference>
<dbReference type="FunFam" id="3.30.40.10:FF:000037">
    <property type="entry name" value="Cdk-activating kinase assembly factor MAT1, centre"/>
    <property type="match status" value="1"/>
</dbReference>
<dbReference type="Gene3D" id="3.30.40.10">
    <property type="entry name" value="Zinc/RING finger domain, C3HC4 (zinc finger)"/>
    <property type="match status" value="1"/>
</dbReference>
<dbReference type="InterPro" id="IPR015877">
    <property type="entry name" value="Cdk-activating_kinase_MAT1_cen"/>
</dbReference>
<dbReference type="InterPro" id="IPR004575">
    <property type="entry name" value="MAT1/Tfb3"/>
</dbReference>
<dbReference type="InterPro" id="IPR001841">
    <property type="entry name" value="Znf_RING"/>
</dbReference>
<dbReference type="InterPro" id="IPR013083">
    <property type="entry name" value="Znf_RING/FYVE/PHD"/>
</dbReference>
<dbReference type="InterPro" id="IPR017907">
    <property type="entry name" value="Znf_RING_CS"/>
</dbReference>
<dbReference type="NCBIfam" id="TIGR00570">
    <property type="entry name" value="cdk7"/>
    <property type="match status" value="1"/>
</dbReference>
<dbReference type="PANTHER" id="PTHR12683">
    <property type="entry name" value="CDK-ACTIVATING KINASE ASSEMBLY FACTOR MAT1"/>
    <property type="match status" value="1"/>
</dbReference>
<dbReference type="PANTHER" id="PTHR12683:SF13">
    <property type="entry name" value="CDK-ACTIVATING KINASE ASSEMBLY FACTOR MAT1"/>
    <property type="match status" value="1"/>
</dbReference>
<dbReference type="Pfam" id="PF06391">
    <property type="entry name" value="MAT1"/>
    <property type="match status" value="1"/>
</dbReference>
<dbReference type="Pfam" id="PF17121">
    <property type="entry name" value="zf-C3HC4_5"/>
    <property type="match status" value="1"/>
</dbReference>
<dbReference type="PIRSF" id="PIRSF003338">
    <property type="entry name" value="MAT1_metazoa"/>
    <property type="match status" value="1"/>
</dbReference>
<dbReference type="SUPFAM" id="SSF57850">
    <property type="entry name" value="RING/U-box"/>
    <property type="match status" value="1"/>
</dbReference>
<dbReference type="PROSITE" id="PS00518">
    <property type="entry name" value="ZF_RING_1"/>
    <property type="match status" value="1"/>
</dbReference>
<dbReference type="PROSITE" id="PS50089">
    <property type="entry name" value="ZF_RING_2"/>
    <property type="match status" value="1"/>
</dbReference>
<keyword id="KW-0002">3D-structure</keyword>
<keyword id="KW-0903">Direct protein sequencing</keyword>
<keyword id="KW-0479">Metal-binding</keyword>
<keyword id="KW-0539">Nucleus</keyword>
<keyword id="KW-0597">Phosphoprotein</keyword>
<keyword id="KW-1185">Reference proteome</keyword>
<keyword id="KW-0804">Transcription</keyword>
<keyword id="KW-0805">Transcription regulation</keyword>
<keyword id="KW-0862">Zinc</keyword>
<keyword id="KW-0863">Zinc-finger</keyword>
<gene>
    <name type="primary">TFB3</name>
    <name type="synonym">RIG2</name>
    <name type="ordered locus">YDR460W</name>
</gene>
<accession>Q03290</accession>
<accession>D6VT84</accession>
<accession>P89104</accession>
<proteinExistence type="evidence at protein level"/>
<name>TFB3_YEAST</name>
<comment type="function">
    <text evidence="6 7">Acts as a component of the general transcription and DNA repair factor IIH (TFIIH or factor B), which is essential for both basal and activated transcription, and is involved in nucleotide excision repair (NER) of damaged DNA. TFIIH has CTD kinase and DNA-dependent ATPase activity, and is essential for polymerase II transcription in vitro.</text>
</comment>
<comment type="subunit">
    <text evidence="3 4 6 7">Component of the transcription factor IIH (TFIIH) holo but not the TFIIH core complex. Component of a complex consisting of KIN28, CCL1 and TFB3; the KIN28-CCL1 dimer is known as the TFIIK complex.</text>
</comment>
<comment type="subcellular location">
    <subcellularLocation>
        <location evidence="1">Nucleus</location>
    </subcellularLocation>
</comment>
<comment type="miscellaneous">
    <text evidence="5">Present with 3050 molecules/cell in log phase SD medium.</text>
</comment>
<comment type="sequence caution" evidence="8">
    <conflict type="frameshift">
        <sequence resource="EMBL-CDS" id="AAB40629"/>
    </conflict>
</comment>
<protein>
    <recommendedName>
        <fullName>RNA polymerase II transcription factor B subunit 3</fullName>
    </recommendedName>
    <alternativeName>
        <fullName>RNA polymerase II transcription factor B 38 kDa subunit</fullName>
    </alternativeName>
    <alternativeName>
        <fullName>RNA polymerase II transcription factor B p38 subunit</fullName>
    </alternativeName>
</protein>
<reference key="1">
    <citation type="journal article" date="1997" name="J. Biol. Chem.">
        <title>Genes for Tfb2, Tfb3, and Tfb4 subunits of yeast transcription/repair factor IIH. Homology to human cyclin-dependent kinase activating kinase and IIH subunits.</title>
        <authorList>
            <person name="Feaver W.J."/>
            <person name="Henry N.L."/>
            <person name="Wang Z."/>
            <person name="Wu X."/>
            <person name="Svejstrup J.Q."/>
            <person name="Bushnell D.A."/>
            <person name="Friedberg E.C."/>
            <person name="Kornberg R.D."/>
        </authorList>
    </citation>
    <scope>NUCLEOTIDE SEQUENCE [GENOMIC DNA]</scope>
    <scope>PROTEIN SEQUENCE OF 71-85 AND 236-250</scope>
    <scope>FUNCTION</scope>
    <scope>SUBUNIT</scope>
    <scope>INTERACTION WITH KIN28</scope>
    <source>
        <strain>DBY2019</strain>
    </source>
</reference>
<reference key="2">
    <citation type="journal article" date="1997" name="Mol. Gen. Genet.">
        <title>Rig2, a RING finger protein that interacts with the Kin28/Ccl1 CTD kinase in yeast.</title>
        <authorList>
            <person name="Faye G."/>
            <person name="Simon M."/>
            <person name="Valay J.G."/>
            <person name="Fesquet D."/>
            <person name="Facca C."/>
        </authorList>
    </citation>
    <scope>NUCLEOTIDE SEQUENCE [GENOMIC DNA]</scope>
    <scope>FUNCTION</scope>
    <scope>SUBUNIT</scope>
</reference>
<reference key="3">
    <citation type="journal article" date="1997" name="Nature">
        <title>The nucleotide sequence of Saccharomyces cerevisiae chromosome IV.</title>
        <authorList>
            <person name="Jacq C."/>
            <person name="Alt-Moerbe J."/>
            <person name="Andre B."/>
            <person name="Arnold W."/>
            <person name="Bahr A."/>
            <person name="Ballesta J.P.G."/>
            <person name="Bargues M."/>
            <person name="Baron L."/>
            <person name="Becker A."/>
            <person name="Biteau N."/>
            <person name="Bloecker H."/>
            <person name="Blugeon C."/>
            <person name="Boskovic J."/>
            <person name="Brandt P."/>
            <person name="Brueckner M."/>
            <person name="Buitrago M.J."/>
            <person name="Coster F."/>
            <person name="Delaveau T."/>
            <person name="del Rey F."/>
            <person name="Dujon B."/>
            <person name="Eide L.G."/>
            <person name="Garcia-Cantalejo J.M."/>
            <person name="Goffeau A."/>
            <person name="Gomez-Peris A."/>
            <person name="Granotier C."/>
            <person name="Hanemann V."/>
            <person name="Hankeln T."/>
            <person name="Hoheisel J.D."/>
            <person name="Jaeger W."/>
            <person name="Jimenez A."/>
            <person name="Jonniaux J.-L."/>
            <person name="Kraemer C."/>
            <person name="Kuester H."/>
            <person name="Laamanen P."/>
            <person name="Legros Y."/>
            <person name="Louis E.J."/>
            <person name="Moeller-Rieker S."/>
            <person name="Monnet A."/>
            <person name="Moro M."/>
            <person name="Mueller-Auer S."/>
            <person name="Nussbaumer B."/>
            <person name="Paricio N."/>
            <person name="Paulin L."/>
            <person name="Perea J."/>
            <person name="Perez-Alonso M."/>
            <person name="Perez-Ortin J.E."/>
            <person name="Pohl T.M."/>
            <person name="Prydz H."/>
            <person name="Purnelle B."/>
            <person name="Rasmussen S.W."/>
            <person name="Remacha M.A."/>
            <person name="Revuelta J.L."/>
            <person name="Rieger M."/>
            <person name="Salom D."/>
            <person name="Saluz H.P."/>
            <person name="Saiz J.E."/>
            <person name="Saren A.-M."/>
            <person name="Schaefer M."/>
            <person name="Scharfe M."/>
            <person name="Schmidt E.R."/>
            <person name="Schneider C."/>
            <person name="Scholler P."/>
            <person name="Schwarz S."/>
            <person name="Soler-Mira A."/>
            <person name="Urrestarazu L.A."/>
            <person name="Verhasselt P."/>
            <person name="Vissers S."/>
            <person name="Voet M."/>
            <person name="Volckaert G."/>
            <person name="Wagner G."/>
            <person name="Wambutt R."/>
            <person name="Wedler E."/>
            <person name="Wedler H."/>
            <person name="Woelfl S."/>
            <person name="Harris D.E."/>
            <person name="Bowman S."/>
            <person name="Brown D."/>
            <person name="Churcher C.M."/>
            <person name="Connor R."/>
            <person name="Dedman K."/>
            <person name="Gentles S."/>
            <person name="Hamlin N."/>
            <person name="Hunt S."/>
            <person name="Jones L."/>
            <person name="McDonald S."/>
            <person name="Murphy L.D."/>
            <person name="Niblett D."/>
            <person name="Odell C."/>
            <person name="Oliver K."/>
            <person name="Rajandream M.A."/>
            <person name="Richards C."/>
            <person name="Shore L."/>
            <person name="Walsh S.V."/>
            <person name="Barrell B.G."/>
            <person name="Dietrich F.S."/>
            <person name="Mulligan J.T."/>
            <person name="Allen E."/>
            <person name="Araujo R."/>
            <person name="Aviles E."/>
            <person name="Berno A."/>
            <person name="Carpenter J."/>
            <person name="Chen E."/>
            <person name="Cherry J.M."/>
            <person name="Chung E."/>
            <person name="Duncan M."/>
            <person name="Hunicke-Smith S."/>
            <person name="Hyman R.W."/>
            <person name="Komp C."/>
            <person name="Lashkari D."/>
            <person name="Lew H."/>
            <person name="Lin D."/>
            <person name="Mosedale D."/>
            <person name="Nakahara K."/>
            <person name="Namath A."/>
            <person name="Oefner P."/>
            <person name="Oh C."/>
            <person name="Petel F.X."/>
            <person name="Roberts D."/>
            <person name="Schramm S."/>
            <person name="Schroeder M."/>
            <person name="Shogren T."/>
            <person name="Shroff N."/>
            <person name="Winant A."/>
            <person name="Yelton M.A."/>
            <person name="Botstein D."/>
            <person name="Davis R.W."/>
            <person name="Johnston M."/>
            <person name="Andrews S."/>
            <person name="Brinkman R."/>
            <person name="Cooper J."/>
            <person name="Ding H."/>
            <person name="Du Z."/>
            <person name="Favello A."/>
            <person name="Fulton L."/>
            <person name="Gattung S."/>
            <person name="Greco T."/>
            <person name="Hallsworth K."/>
            <person name="Hawkins J."/>
            <person name="Hillier L.W."/>
            <person name="Jier M."/>
            <person name="Johnson D."/>
            <person name="Johnston L."/>
            <person name="Kirsten J."/>
            <person name="Kucaba T."/>
            <person name="Langston Y."/>
            <person name="Latreille P."/>
            <person name="Le T."/>
            <person name="Mardis E."/>
            <person name="Menezes S."/>
            <person name="Miller N."/>
            <person name="Nhan M."/>
            <person name="Pauley A."/>
            <person name="Peluso D."/>
            <person name="Rifkin L."/>
            <person name="Riles L."/>
            <person name="Taich A."/>
            <person name="Trevaskis E."/>
            <person name="Vignati D."/>
            <person name="Wilcox L."/>
            <person name="Wohldman P."/>
            <person name="Vaudin M."/>
            <person name="Wilson R."/>
            <person name="Waterston R."/>
            <person name="Albermann K."/>
            <person name="Hani J."/>
            <person name="Heumann K."/>
            <person name="Kleine K."/>
            <person name="Mewes H.-W."/>
            <person name="Zollner A."/>
            <person name="Zaccaria P."/>
        </authorList>
    </citation>
    <scope>NUCLEOTIDE SEQUENCE [LARGE SCALE GENOMIC DNA]</scope>
    <source>
        <strain>ATCC 204508 / S288c</strain>
    </source>
</reference>
<reference key="4">
    <citation type="submission" date="2003-10" db="EMBL/GenBank/DDBJ databases">
        <authorList>
            <person name="Sethuraman A."/>
            <person name="Cherry J.M."/>
        </authorList>
    </citation>
    <scope>SEQUENCE REVISION</scope>
    <source>
        <strain>ATCC 204508 / S288c</strain>
    </source>
</reference>
<reference key="5">
    <citation type="journal article" date="2014" name="G3 (Bethesda)">
        <title>The reference genome sequence of Saccharomyces cerevisiae: Then and now.</title>
        <authorList>
            <person name="Engel S.R."/>
            <person name="Dietrich F.S."/>
            <person name="Fisk D.G."/>
            <person name="Binkley G."/>
            <person name="Balakrishnan R."/>
            <person name="Costanzo M.C."/>
            <person name="Dwight S.S."/>
            <person name="Hitz B.C."/>
            <person name="Karra K."/>
            <person name="Nash R.S."/>
            <person name="Weng S."/>
            <person name="Wong E.D."/>
            <person name="Lloyd P."/>
            <person name="Skrzypek M.S."/>
            <person name="Miyasato S.R."/>
            <person name="Simison M."/>
            <person name="Cherry J.M."/>
        </authorList>
    </citation>
    <scope>GENOME REANNOTATION</scope>
    <source>
        <strain>ATCC 204508 / S288c</strain>
    </source>
</reference>
<reference key="6">
    <citation type="journal article" date="2002" name="Mol. Cell. Biol.">
        <title>Kin28 is found within TFIIH and a Kin28-Ccl1-Tfb3 trimer complex with differential sensitivities to T-loop phosphorylation.</title>
        <authorList>
            <person name="Keogh M.-C."/>
            <person name="Cho E.-J."/>
            <person name="Podolny V."/>
            <person name="Buratowski S."/>
        </authorList>
    </citation>
    <scope>IDENTIFICATION IN A COMPLEX WITH KIN28 AND CCL1</scope>
</reference>
<reference key="7">
    <citation type="journal article" date="2003" name="J. Biol. Chem.">
        <title>Revised subunit structure of yeast transcription factor IIH (TFIIH) and reconciliation with human TFIIH.</title>
        <authorList>
            <person name="Takagi Y."/>
            <person name="Komori H."/>
            <person name="Chang W.-H."/>
            <person name="Hudmon A."/>
            <person name="Erdjument-Bromage H."/>
            <person name="Tempst P."/>
            <person name="Kornberg R.D."/>
        </authorList>
    </citation>
    <scope>SUBUNIT</scope>
</reference>
<reference key="8">
    <citation type="journal article" date="2003" name="Nature">
        <title>Global analysis of protein expression in yeast.</title>
        <authorList>
            <person name="Ghaemmaghami S."/>
            <person name="Huh W.-K."/>
            <person name="Bower K."/>
            <person name="Howson R.W."/>
            <person name="Belle A."/>
            <person name="Dephoure N."/>
            <person name="O'Shea E.K."/>
            <person name="Weissman J.S."/>
        </authorList>
    </citation>
    <scope>LEVEL OF PROTEIN EXPRESSION [LARGE SCALE ANALYSIS]</scope>
</reference>
<reference key="9">
    <citation type="journal article" date="2007" name="J. Proteome Res.">
        <title>Large-scale phosphorylation analysis of alpha-factor-arrested Saccharomyces cerevisiae.</title>
        <authorList>
            <person name="Li X."/>
            <person name="Gerber S.A."/>
            <person name="Rudner A.D."/>
            <person name="Beausoleil S.A."/>
            <person name="Haas W."/>
            <person name="Villen J."/>
            <person name="Elias J.E."/>
            <person name="Gygi S.P."/>
        </authorList>
    </citation>
    <scope>PHOSPHORYLATION [LARGE SCALE ANALYSIS] AT THR-258</scope>
    <scope>IDENTIFICATION BY MASS SPECTROMETRY [LARGE SCALE ANALYSIS]</scope>
    <source>
        <strain>ADR376</strain>
    </source>
</reference>
<reference key="10">
    <citation type="journal article" date="2008" name="Mol. Cell. Proteomics">
        <title>A multidimensional chromatography technology for in-depth phosphoproteome analysis.</title>
        <authorList>
            <person name="Albuquerque C.P."/>
            <person name="Smolka M.B."/>
            <person name="Payne S.H."/>
            <person name="Bafna V."/>
            <person name="Eng J."/>
            <person name="Zhou H."/>
        </authorList>
    </citation>
    <scope>PHOSPHORYLATION [LARGE SCALE ANALYSIS] AT SER-157 AND THR-258</scope>
    <scope>IDENTIFICATION BY MASS SPECTROMETRY [LARGE SCALE ANALYSIS]</scope>
</reference>
<evidence type="ECO:0000250" key="1"/>
<evidence type="ECO:0000255" key="2">
    <source>
        <dbReference type="PROSITE-ProRule" id="PRU00175"/>
    </source>
</evidence>
<evidence type="ECO:0000269" key="3">
    <source>
    </source>
</evidence>
<evidence type="ECO:0000269" key="4">
    <source>
    </source>
</evidence>
<evidence type="ECO:0000269" key="5">
    <source>
    </source>
</evidence>
<evidence type="ECO:0000269" key="6">
    <source>
    </source>
</evidence>
<evidence type="ECO:0000269" key="7">
    <source>
    </source>
</evidence>
<evidence type="ECO:0000305" key="8"/>
<evidence type="ECO:0007744" key="9">
    <source>
    </source>
</evidence>
<evidence type="ECO:0007744" key="10">
    <source>
    </source>
</evidence>
<evidence type="ECO:0007829" key="11">
    <source>
        <dbReference type="PDB" id="7KUE"/>
    </source>
</evidence>
<evidence type="ECO:0007829" key="12">
    <source>
        <dbReference type="PDB" id="7ML0"/>
    </source>
</evidence>
<evidence type="ECO:0007829" key="13">
    <source>
        <dbReference type="PDB" id="7ML2"/>
    </source>
</evidence>
<evidence type="ECO:0007829" key="14">
    <source>
        <dbReference type="PDB" id="7O4J"/>
    </source>
</evidence>
<evidence type="ECO:0007829" key="15">
    <source>
        <dbReference type="PDB" id="7O75"/>
    </source>
</evidence>
<sequence length="321" mass="38128">MLMDEYEENKDMCPICKTDRYLSPDVKFLVNPECYHRICESCVDRIFSLGPAQCPYKGCDKILRKNKFKTQIFDDVEVEKEVDIRKRVFNVFNKTIDDFNGDLVEYNKYLEEVEDIIYKLDHGIDVAKTEEKLRTYEELNKQLIMNNLERSRTEIESFEQRQKFEKEMKLKKRLLERQIEEEERMNKEWTKKEIVNRLSTTTQDINETIEGVKNTVKLKKSSARRKLEELNRVLKNNPYFNSNVNVQNSRLKDAVPFTPFNGDREAHPRFTLKGSVYNDPFIKDLEHRKEFIASGFNTNYAYERVLTEAFMGLGCVISEEL</sequence>
<feature type="chain" id="PRO_0000055942" description="RNA polymerase II transcription factor B subunit 3">
    <location>
        <begin position="1"/>
        <end position="321"/>
    </location>
</feature>
<feature type="zinc finger region" description="RING-type" evidence="2">
    <location>
        <begin position="13"/>
        <end position="60"/>
    </location>
</feature>
<feature type="modified residue" description="Phosphoserine" evidence="10">
    <location>
        <position position="157"/>
    </location>
</feature>
<feature type="modified residue" description="Phosphothreonine" evidence="9 10">
    <location>
        <position position="258"/>
    </location>
</feature>
<feature type="turn" evidence="14">
    <location>
        <begin position="14"/>
        <end position="16"/>
    </location>
</feature>
<feature type="turn" evidence="14">
    <location>
        <begin position="20"/>
        <end position="22"/>
    </location>
</feature>
<feature type="strand" evidence="14">
    <location>
        <begin position="28"/>
        <end position="30"/>
    </location>
</feature>
<feature type="turn" evidence="14">
    <location>
        <begin position="32"/>
        <end position="34"/>
    </location>
</feature>
<feature type="strand" evidence="15">
    <location>
        <begin position="37"/>
        <end position="39"/>
    </location>
</feature>
<feature type="helix" evidence="14">
    <location>
        <begin position="40"/>
        <end position="47"/>
    </location>
</feature>
<feature type="strand" evidence="14">
    <location>
        <begin position="48"/>
        <end position="50"/>
    </location>
</feature>
<feature type="strand" evidence="12">
    <location>
        <begin position="51"/>
        <end position="53"/>
    </location>
</feature>
<feature type="strand" evidence="13">
    <location>
        <begin position="61"/>
        <end position="63"/>
    </location>
</feature>
<feature type="helix" evidence="14">
    <location>
        <begin position="65"/>
        <end position="67"/>
    </location>
</feature>
<feature type="strand" evidence="12">
    <location>
        <begin position="72"/>
        <end position="74"/>
    </location>
</feature>
<feature type="helix" evidence="14">
    <location>
        <begin position="76"/>
        <end position="89"/>
    </location>
</feature>
<feature type="helix" evidence="12">
    <location>
        <begin position="92"/>
        <end position="94"/>
    </location>
</feature>
<feature type="helix" evidence="14">
    <location>
        <begin position="96"/>
        <end position="99"/>
    </location>
</feature>
<feature type="helix" evidence="14">
    <location>
        <begin position="103"/>
        <end position="122"/>
    </location>
</feature>
<feature type="helix" evidence="14">
    <location>
        <begin position="126"/>
        <end position="138"/>
    </location>
</feature>
<feature type="strand" evidence="11">
    <location>
        <begin position="262"/>
        <end position="265"/>
    </location>
</feature>
<feature type="turn" evidence="11">
    <location>
        <begin position="280"/>
        <end position="284"/>
    </location>
</feature>
<feature type="helix" evidence="11">
    <location>
        <begin position="285"/>
        <end position="287"/>
    </location>
</feature>
<feature type="helix" evidence="11">
    <location>
        <begin position="289"/>
        <end position="292"/>
    </location>
</feature>
<feature type="turn" evidence="11">
    <location>
        <begin position="293"/>
        <end position="295"/>
    </location>
</feature>
<feature type="helix" evidence="11">
    <location>
        <begin position="298"/>
        <end position="308"/>
    </location>
</feature>
<feature type="turn" evidence="11">
    <location>
        <begin position="309"/>
        <end position="312"/>
    </location>
</feature>